<reference key="1">
    <citation type="journal article" date="2003" name="Proc. Natl. Acad. Sci. U.S.A.">
        <title>The complete genome sequence of the carcinogenic bacterium Helicobacter hepaticus.</title>
        <authorList>
            <person name="Suerbaum S."/>
            <person name="Josenhans C."/>
            <person name="Sterzenbach T."/>
            <person name="Drescher B."/>
            <person name="Brandt P."/>
            <person name="Bell M."/>
            <person name="Droege M."/>
            <person name="Fartmann B."/>
            <person name="Fischer H.-P."/>
            <person name="Ge Z."/>
            <person name="Hoerster A."/>
            <person name="Holland R."/>
            <person name="Klein K."/>
            <person name="Koenig J."/>
            <person name="Macko L."/>
            <person name="Mendz G.L."/>
            <person name="Nyakatura G."/>
            <person name="Schauer D.B."/>
            <person name="Shen Z."/>
            <person name="Weber J."/>
            <person name="Frosch M."/>
            <person name="Fox J.G."/>
        </authorList>
    </citation>
    <scope>NUCLEOTIDE SEQUENCE [LARGE SCALE GENOMIC DNA]</scope>
    <source>
        <strain>ATCC 51449 / 3B1</strain>
    </source>
</reference>
<organism>
    <name type="scientific">Helicobacter hepaticus (strain ATCC 51449 / 3B1)</name>
    <dbReference type="NCBI Taxonomy" id="235279"/>
    <lineage>
        <taxon>Bacteria</taxon>
        <taxon>Pseudomonadati</taxon>
        <taxon>Campylobacterota</taxon>
        <taxon>Epsilonproteobacteria</taxon>
        <taxon>Campylobacterales</taxon>
        <taxon>Helicobacteraceae</taxon>
        <taxon>Helicobacter</taxon>
    </lineage>
</organism>
<gene>
    <name evidence="1" type="primary">rpsJ</name>
    <name type="ordered locus">HH_1377</name>
</gene>
<proteinExistence type="inferred from homology"/>
<sequence length="103" mass="11905">MERIRLRLKAYDHRVLDRSVASIVEAVKRTGSEIRGPVPLPTKKKRYTVLRSPHINKDSREQFEIRVHHRIIDIMSATPDTVDSLMKLDLAPEVDVEVMSMSK</sequence>
<protein>
    <recommendedName>
        <fullName evidence="1">Small ribosomal subunit protein uS10</fullName>
    </recommendedName>
    <alternativeName>
        <fullName evidence="2">30S ribosomal protein S10</fullName>
    </alternativeName>
</protein>
<comment type="function">
    <text evidence="1">Involved in the binding of tRNA to the ribosomes.</text>
</comment>
<comment type="subunit">
    <text evidence="1">Part of the 30S ribosomal subunit.</text>
</comment>
<comment type="similarity">
    <text evidence="1">Belongs to the universal ribosomal protein uS10 family.</text>
</comment>
<name>RS10_HELHP</name>
<keyword id="KW-1185">Reference proteome</keyword>
<keyword id="KW-0687">Ribonucleoprotein</keyword>
<keyword id="KW-0689">Ribosomal protein</keyword>
<accession>Q7VGE5</accession>
<dbReference type="EMBL" id="AE017125">
    <property type="protein sequence ID" value="AAP77974.1"/>
    <property type="molecule type" value="Genomic_DNA"/>
</dbReference>
<dbReference type="RefSeq" id="WP_011116217.1">
    <property type="nucleotide sequence ID" value="NC_004917.1"/>
</dbReference>
<dbReference type="SMR" id="Q7VGE5"/>
<dbReference type="STRING" id="235279.HH_1377"/>
<dbReference type="KEGG" id="hhe:HH_1377"/>
<dbReference type="eggNOG" id="COG0051">
    <property type="taxonomic scope" value="Bacteria"/>
</dbReference>
<dbReference type="HOGENOM" id="CLU_122625_1_2_7"/>
<dbReference type="OrthoDB" id="9804464at2"/>
<dbReference type="Proteomes" id="UP000002495">
    <property type="component" value="Chromosome"/>
</dbReference>
<dbReference type="GO" id="GO:1990904">
    <property type="term" value="C:ribonucleoprotein complex"/>
    <property type="evidence" value="ECO:0007669"/>
    <property type="project" value="UniProtKB-KW"/>
</dbReference>
<dbReference type="GO" id="GO:0005840">
    <property type="term" value="C:ribosome"/>
    <property type="evidence" value="ECO:0007669"/>
    <property type="project" value="UniProtKB-KW"/>
</dbReference>
<dbReference type="GO" id="GO:0003735">
    <property type="term" value="F:structural constituent of ribosome"/>
    <property type="evidence" value="ECO:0007669"/>
    <property type="project" value="InterPro"/>
</dbReference>
<dbReference type="GO" id="GO:0000049">
    <property type="term" value="F:tRNA binding"/>
    <property type="evidence" value="ECO:0007669"/>
    <property type="project" value="UniProtKB-UniRule"/>
</dbReference>
<dbReference type="GO" id="GO:0006412">
    <property type="term" value="P:translation"/>
    <property type="evidence" value="ECO:0007669"/>
    <property type="project" value="UniProtKB-UniRule"/>
</dbReference>
<dbReference type="FunFam" id="3.30.70.600:FF:000003">
    <property type="entry name" value="30S ribosomal protein S10"/>
    <property type="match status" value="1"/>
</dbReference>
<dbReference type="Gene3D" id="3.30.70.600">
    <property type="entry name" value="Ribosomal protein S10 domain"/>
    <property type="match status" value="1"/>
</dbReference>
<dbReference type="HAMAP" id="MF_00508">
    <property type="entry name" value="Ribosomal_uS10"/>
    <property type="match status" value="1"/>
</dbReference>
<dbReference type="InterPro" id="IPR001848">
    <property type="entry name" value="Ribosomal_uS10"/>
</dbReference>
<dbReference type="InterPro" id="IPR018268">
    <property type="entry name" value="Ribosomal_uS10_CS"/>
</dbReference>
<dbReference type="InterPro" id="IPR027486">
    <property type="entry name" value="Ribosomal_uS10_dom"/>
</dbReference>
<dbReference type="InterPro" id="IPR036838">
    <property type="entry name" value="Ribosomal_uS10_dom_sf"/>
</dbReference>
<dbReference type="NCBIfam" id="NF001861">
    <property type="entry name" value="PRK00596.1"/>
    <property type="match status" value="1"/>
</dbReference>
<dbReference type="NCBIfam" id="TIGR01049">
    <property type="entry name" value="rpsJ_bact"/>
    <property type="match status" value="1"/>
</dbReference>
<dbReference type="PANTHER" id="PTHR11700">
    <property type="entry name" value="30S RIBOSOMAL PROTEIN S10 FAMILY MEMBER"/>
    <property type="match status" value="1"/>
</dbReference>
<dbReference type="Pfam" id="PF00338">
    <property type="entry name" value="Ribosomal_S10"/>
    <property type="match status" value="1"/>
</dbReference>
<dbReference type="PRINTS" id="PR00971">
    <property type="entry name" value="RIBOSOMALS10"/>
</dbReference>
<dbReference type="SMART" id="SM01403">
    <property type="entry name" value="Ribosomal_S10"/>
    <property type="match status" value="1"/>
</dbReference>
<dbReference type="SUPFAM" id="SSF54999">
    <property type="entry name" value="Ribosomal protein S10"/>
    <property type="match status" value="1"/>
</dbReference>
<dbReference type="PROSITE" id="PS00361">
    <property type="entry name" value="RIBOSOMAL_S10"/>
    <property type="match status" value="1"/>
</dbReference>
<feature type="chain" id="PRO_0000146538" description="Small ribosomal subunit protein uS10">
    <location>
        <begin position="1"/>
        <end position="103"/>
    </location>
</feature>
<evidence type="ECO:0000255" key="1">
    <source>
        <dbReference type="HAMAP-Rule" id="MF_00508"/>
    </source>
</evidence>
<evidence type="ECO:0000305" key="2"/>